<accession>P0CAS0</accession>
<accession>C3UWD0</accession>
<proteinExistence type="evidence at protein level"/>
<organism>
    <name type="scientific">Cerastes cerastes</name>
    <name type="common">Horned desert viper</name>
    <dbReference type="NCBI Taxonomy" id="8697"/>
    <lineage>
        <taxon>Eukaryota</taxon>
        <taxon>Metazoa</taxon>
        <taxon>Chordata</taxon>
        <taxon>Craniata</taxon>
        <taxon>Vertebrata</taxon>
        <taxon>Euteleostomi</taxon>
        <taxon>Lepidosauria</taxon>
        <taxon>Squamata</taxon>
        <taxon>Bifurcata</taxon>
        <taxon>Unidentata</taxon>
        <taxon>Episquamata</taxon>
        <taxon>Toxicofera</taxon>
        <taxon>Serpentes</taxon>
        <taxon>Colubroidea</taxon>
        <taxon>Viperidae</taxon>
        <taxon>Viperinae</taxon>
        <taxon>Cerastes</taxon>
    </lineage>
</organism>
<dbReference type="EC" id="3.1.1.4"/>
<dbReference type="EMBL" id="FJ754187">
    <property type="protein sequence ID" value="ACO92623.1"/>
    <property type="molecule type" value="mRNA"/>
</dbReference>
<dbReference type="SMR" id="P0CAS0"/>
<dbReference type="GO" id="GO:0005576">
    <property type="term" value="C:extracellular region"/>
    <property type="evidence" value="ECO:0007669"/>
    <property type="project" value="UniProtKB-SubCell"/>
</dbReference>
<dbReference type="GO" id="GO:0005509">
    <property type="term" value="F:calcium ion binding"/>
    <property type="evidence" value="ECO:0007669"/>
    <property type="project" value="InterPro"/>
</dbReference>
<dbReference type="GO" id="GO:0047498">
    <property type="term" value="F:calcium-dependent phospholipase A2 activity"/>
    <property type="evidence" value="ECO:0007669"/>
    <property type="project" value="TreeGrafter"/>
</dbReference>
<dbReference type="GO" id="GO:0005543">
    <property type="term" value="F:phospholipid binding"/>
    <property type="evidence" value="ECO:0007669"/>
    <property type="project" value="TreeGrafter"/>
</dbReference>
<dbReference type="GO" id="GO:0090729">
    <property type="term" value="F:toxin activity"/>
    <property type="evidence" value="ECO:0007669"/>
    <property type="project" value="UniProtKB-KW"/>
</dbReference>
<dbReference type="GO" id="GO:0001525">
    <property type="term" value="P:angiogenesis"/>
    <property type="evidence" value="ECO:0007669"/>
    <property type="project" value="UniProtKB-KW"/>
</dbReference>
<dbReference type="GO" id="GO:0050482">
    <property type="term" value="P:arachidonate secretion"/>
    <property type="evidence" value="ECO:0007669"/>
    <property type="project" value="InterPro"/>
</dbReference>
<dbReference type="GO" id="GO:0016042">
    <property type="term" value="P:lipid catabolic process"/>
    <property type="evidence" value="ECO:0007669"/>
    <property type="project" value="UniProtKB-KW"/>
</dbReference>
<dbReference type="GO" id="GO:0042130">
    <property type="term" value="P:negative regulation of T cell proliferation"/>
    <property type="evidence" value="ECO:0007669"/>
    <property type="project" value="TreeGrafter"/>
</dbReference>
<dbReference type="GO" id="GO:0006644">
    <property type="term" value="P:phospholipid metabolic process"/>
    <property type="evidence" value="ECO:0007669"/>
    <property type="project" value="InterPro"/>
</dbReference>
<dbReference type="CDD" id="cd00125">
    <property type="entry name" value="PLA2c"/>
    <property type="match status" value="1"/>
</dbReference>
<dbReference type="Gene3D" id="1.20.90.10">
    <property type="entry name" value="Phospholipase A2 domain"/>
    <property type="match status" value="1"/>
</dbReference>
<dbReference type="InterPro" id="IPR001211">
    <property type="entry name" value="PLipase_A2"/>
</dbReference>
<dbReference type="InterPro" id="IPR016090">
    <property type="entry name" value="PLipase_A2_dom"/>
</dbReference>
<dbReference type="InterPro" id="IPR036444">
    <property type="entry name" value="PLipase_A2_dom_sf"/>
</dbReference>
<dbReference type="InterPro" id="IPR033113">
    <property type="entry name" value="PLipase_A2_His_AS"/>
</dbReference>
<dbReference type="PANTHER" id="PTHR11716">
    <property type="entry name" value="PHOSPHOLIPASE A2 FAMILY MEMBER"/>
    <property type="match status" value="1"/>
</dbReference>
<dbReference type="PANTHER" id="PTHR11716:SF9">
    <property type="entry name" value="PHOSPHOLIPASE A2, MEMBRANE ASSOCIATED"/>
    <property type="match status" value="1"/>
</dbReference>
<dbReference type="Pfam" id="PF00068">
    <property type="entry name" value="Phospholip_A2_1"/>
    <property type="match status" value="1"/>
</dbReference>
<dbReference type="PRINTS" id="PR00389">
    <property type="entry name" value="PHPHLIPASEA2"/>
</dbReference>
<dbReference type="SMART" id="SM00085">
    <property type="entry name" value="PA2c"/>
    <property type="match status" value="1"/>
</dbReference>
<dbReference type="SUPFAM" id="SSF48619">
    <property type="entry name" value="Phospholipase A2, PLA2"/>
    <property type="match status" value="1"/>
</dbReference>
<dbReference type="PROSITE" id="PS00118">
    <property type="entry name" value="PA2_HIS"/>
    <property type="match status" value="1"/>
</dbReference>
<evidence type="ECO:0000250" key="1"/>
<evidence type="ECO:0000255" key="2">
    <source>
        <dbReference type="PROSITE-ProRule" id="PRU10035"/>
    </source>
</evidence>
<evidence type="ECO:0000255" key="3">
    <source>
        <dbReference type="PROSITE-ProRule" id="PRU10036"/>
    </source>
</evidence>
<evidence type="ECO:0000269" key="4">
    <source>
    </source>
</evidence>
<evidence type="ECO:0000269" key="5">
    <source ref="2"/>
</evidence>
<evidence type="ECO:0000305" key="6"/>
<evidence type="ECO:0000305" key="7">
    <source>
    </source>
</evidence>
<evidence type="ECO:0000305" key="8">
    <source ref="2"/>
</evidence>
<keyword id="KW-0037">Angiogenesis</keyword>
<keyword id="KW-1203">Blood coagulation cascade inhibiting toxin</keyword>
<keyword id="KW-0106">Calcium</keyword>
<keyword id="KW-0903">Direct protein sequencing</keyword>
<keyword id="KW-1015">Disulfide bond</keyword>
<keyword id="KW-0325">Glycoprotein</keyword>
<keyword id="KW-1199">Hemostasis impairing toxin</keyword>
<keyword id="KW-0378">Hydrolase</keyword>
<keyword id="KW-0442">Lipid degradation</keyword>
<keyword id="KW-0443">Lipid metabolism</keyword>
<keyword id="KW-0479">Metal-binding</keyword>
<keyword id="KW-1201">Platelet aggregation inhibiting toxin</keyword>
<keyword id="KW-0964">Secreted</keyword>
<keyword id="KW-0732">Signal</keyword>
<keyword id="KW-0800">Toxin</keyword>
<protein>
    <recommendedName>
        <fullName>Acidic phospholipase A2 CC-PLA2-2</fullName>
        <shortName>svPLA2</shortName>
        <ecNumber>3.1.1.4</ecNumber>
    </recommendedName>
    <alternativeName>
        <fullName>Phosphatidylcholine 2-acylhydrolase</fullName>
    </alternativeName>
</protein>
<reference key="1">
    <citation type="journal article" date="2010" name="Lab. Invest.">
        <title>CC-PLA2-1 and CC-PLA2-2, two Cerastes cerastes venom-derived phospholipases A2, inhibit angiogenesis both in vitro and in vivo.</title>
        <authorList>
            <person name="Kessentini-Zouari R."/>
            <person name="Jebali J."/>
            <person name="Taboubi S."/>
            <person name="Srairi-Abid N."/>
            <person name="Morjen M."/>
            <person name="Kallech-Ziri O."/>
            <person name="Bezzine S."/>
            <person name="Marvaldi J."/>
            <person name="El Ayeb M."/>
            <person name="Marrakchi N."/>
            <person name="Luis J."/>
        </authorList>
    </citation>
    <scope>NUCLEOTIDE SEQUENCE [MRNA]</scope>
    <scope>FUNCTION</scope>
    <scope>3D-STRUCTURE MODELING</scope>
    <source>
        <tissue>Venom</tissue>
        <tissue>Venom gland</tissue>
    </source>
</reference>
<reference key="2">
    <citation type="journal article" date="2009" name="Toxicon">
        <title>Two purified and characterized phospholipases A2 from Cerastes cerastes venom, that inhibit cancerous cell adhesion and migration.</title>
        <authorList>
            <person name="Zouari-Kessentini R."/>
            <person name="Luis J."/>
            <person name="Karray A."/>
            <person name="Kallech-Ziri O."/>
            <person name="Srairi-Abid N."/>
            <person name="Bazaa A."/>
            <person name="Loret E."/>
            <person name="Bezzine S."/>
            <person name="El Ayeb M."/>
            <person name="Marrakchi N."/>
        </authorList>
    </citation>
    <scope>PROTEIN SEQUENCE OF 17-66</scope>
    <scope>FUNCTION</scope>
    <scope>COFACTOR</scope>
    <scope>MASS SPECTROMETRY</scope>
    <scope>SUBCELLULAR LOCATION</scope>
    <source>
        <tissue>Venom</tissue>
    </source>
</reference>
<name>PA2A2_CERCE</name>
<feature type="signal peptide" evidence="5">
    <location>
        <begin position="1"/>
        <end position="16"/>
    </location>
</feature>
<feature type="chain" id="PRO_0000376917" description="Acidic phospholipase A2 CC-PLA2-2">
    <location>
        <begin position="17"/>
        <end position="136"/>
    </location>
</feature>
<feature type="active site" evidence="1">
    <location>
        <position position="63"/>
    </location>
</feature>
<feature type="active site" evidence="1">
    <location>
        <position position="103"/>
    </location>
</feature>
<feature type="binding site" evidence="1">
    <location>
        <position position="43"/>
    </location>
    <ligand>
        <name>Ca(2+)</name>
        <dbReference type="ChEBI" id="CHEBI:29108"/>
    </ligand>
</feature>
<feature type="binding site" evidence="1">
    <location>
        <position position="45"/>
    </location>
    <ligand>
        <name>Ca(2+)</name>
        <dbReference type="ChEBI" id="CHEBI:29108"/>
    </ligand>
</feature>
<feature type="binding site" evidence="1">
    <location>
        <position position="47"/>
    </location>
    <ligand>
        <name>Ca(2+)</name>
        <dbReference type="ChEBI" id="CHEBI:29108"/>
    </ligand>
</feature>
<feature type="binding site" evidence="1">
    <location>
        <position position="64"/>
    </location>
    <ligand>
        <name>Ca(2+)</name>
        <dbReference type="ChEBI" id="CHEBI:29108"/>
    </ligand>
</feature>
<feature type="disulfide bond" evidence="1">
    <location>
        <begin position="42"/>
        <end position="129"/>
    </location>
</feature>
<feature type="disulfide bond" evidence="1">
    <location>
        <begin position="44"/>
        <end position="60"/>
    </location>
</feature>
<feature type="disulfide bond" evidence="1">
    <location>
        <begin position="59"/>
        <end position="109"/>
    </location>
</feature>
<feature type="disulfide bond" evidence="1">
    <location>
        <begin position="65"/>
        <end position="136"/>
    </location>
</feature>
<feature type="disulfide bond" evidence="1">
    <location>
        <begin position="66"/>
        <end position="102"/>
    </location>
</feature>
<feature type="disulfide bond" evidence="1">
    <location>
        <begin position="73"/>
        <end position="95"/>
    </location>
</feature>
<feature type="disulfide bond" evidence="1">
    <location>
        <begin position="90"/>
        <end position="100"/>
    </location>
</feature>
<comment type="function">
    <text evidence="4 5">Snake venom phospholipase A2 that inhibits blood coagulation and platelet aggregation induced by ADP and arachidonic acid. Inhibits tumor cell adhesion and migration in a dose-dependent manner. Abolishes the attachment of human brain microvascular endothelial cells (HBMEC) to fibrinogen (IC(50)=0.2 uM) and dramatically reduces its adhesion to fibronectin (IC(50)=0.3 uM), whereas no effect is observed on type I collagen, vitronectin or laminin 1. Also blocks the cell migration toward fibronectin and fibrinogen. These effects are not dependent of the catalytic activity, but are mediated by alpha-5/beta-1 (ITGA5/ITGB1) and alpha-v-containing (ITGAV) integrins. Also shows anti-angiogenic activity in chicken chorioallantoix membrane assay. Has a relatively high enzymatic activity. PLA2 catalyzes the calcium-dependent hydrolysis of the 2-acyl groups in 3-sn-phosphoglycerides.</text>
</comment>
<comment type="catalytic activity">
    <reaction evidence="2 3">
        <text>a 1,2-diacyl-sn-glycero-3-phosphocholine + H2O = a 1-acyl-sn-glycero-3-phosphocholine + a fatty acid + H(+)</text>
        <dbReference type="Rhea" id="RHEA:15801"/>
        <dbReference type="ChEBI" id="CHEBI:15377"/>
        <dbReference type="ChEBI" id="CHEBI:15378"/>
        <dbReference type="ChEBI" id="CHEBI:28868"/>
        <dbReference type="ChEBI" id="CHEBI:57643"/>
        <dbReference type="ChEBI" id="CHEBI:58168"/>
        <dbReference type="EC" id="3.1.1.4"/>
    </reaction>
</comment>
<comment type="cofactor">
    <cofactor evidence="5">
        <name>Ca(2+)</name>
        <dbReference type="ChEBI" id="CHEBI:29108"/>
    </cofactor>
    <text evidence="5">Binds 1 Ca(2+) ion.</text>
</comment>
<comment type="subcellular location">
    <subcellularLocation>
        <location evidence="5">Secreted</location>
    </subcellularLocation>
</comment>
<comment type="tissue specificity">
    <text evidence="8">Expressed by the venom gland.</text>
</comment>
<comment type="PTM">
    <text>Glycosylated (2.5%).</text>
</comment>
<comment type="mass spectrometry"/>
<comment type="miscellaneous">
    <text evidence="7">Negative results: does not show cytotoxic activity on human fibrosarcoma and melanoma cell lines.</text>
</comment>
<comment type="similarity">
    <text evidence="6">Belongs to the phospholipase A2 family. Group II subfamily. D49 sub-subfamily.</text>
</comment>
<sequence>MRTLWIVAVWLMGVEGNLFQFGKMIKHKTGKSALLSYSGNPCYCGWGGQGPPQDATDHCCFVHDCCYGEENACYPKTAFTLKFENQIIICDEDPCNYAVCMCDRVAAICGGENVATSDAKYLFYRSMGCEEESVQC</sequence>